<comment type="catalytic activity">
    <reaction>
        <text>[thioredoxin]-dithiol + NADP(+) = [thioredoxin]-disulfide + NADPH + H(+)</text>
        <dbReference type="Rhea" id="RHEA:20345"/>
        <dbReference type="Rhea" id="RHEA-COMP:10698"/>
        <dbReference type="Rhea" id="RHEA-COMP:10700"/>
        <dbReference type="ChEBI" id="CHEBI:15378"/>
        <dbReference type="ChEBI" id="CHEBI:29950"/>
        <dbReference type="ChEBI" id="CHEBI:50058"/>
        <dbReference type="ChEBI" id="CHEBI:57783"/>
        <dbReference type="ChEBI" id="CHEBI:58349"/>
        <dbReference type="EC" id="1.8.1.9"/>
    </reaction>
</comment>
<comment type="cofactor">
    <cofactor evidence="2">
        <name>FAD</name>
        <dbReference type="ChEBI" id="CHEBI:57692"/>
    </cofactor>
    <text evidence="2">Binds 1 FAD per subunit.</text>
</comment>
<comment type="subunit">
    <text evidence="2">Homodimer.</text>
</comment>
<comment type="subcellular location">
    <subcellularLocation>
        <location evidence="1">Cytoplasm</location>
    </subcellularLocation>
</comment>
<comment type="miscellaneous">
    <text>The active site is a redox-active disulfide bond.</text>
</comment>
<comment type="similarity">
    <text evidence="3">Belongs to the class-II pyridine nucleotide-disulfide oxidoreductase family.</text>
</comment>
<reference key="1">
    <citation type="journal article" date="1995" name="Science">
        <title>Whole-genome random sequencing and assembly of Haemophilus influenzae Rd.</title>
        <authorList>
            <person name="Fleischmann R.D."/>
            <person name="Adams M.D."/>
            <person name="White O."/>
            <person name="Clayton R.A."/>
            <person name="Kirkness E.F."/>
            <person name="Kerlavage A.R."/>
            <person name="Bult C.J."/>
            <person name="Tomb J.-F."/>
            <person name="Dougherty B.A."/>
            <person name="Merrick J.M."/>
            <person name="McKenney K."/>
            <person name="Sutton G.G."/>
            <person name="FitzHugh W."/>
            <person name="Fields C.A."/>
            <person name="Gocayne J.D."/>
            <person name="Scott J.D."/>
            <person name="Shirley R."/>
            <person name="Liu L.-I."/>
            <person name="Glodek A."/>
            <person name="Kelley J.M."/>
            <person name="Weidman J.F."/>
            <person name="Phillips C.A."/>
            <person name="Spriggs T."/>
            <person name="Hedblom E."/>
            <person name="Cotton M.D."/>
            <person name="Utterback T.R."/>
            <person name="Hanna M.C."/>
            <person name="Nguyen D.T."/>
            <person name="Saudek D.M."/>
            <person name="Brandon R.C."/>
            <person name="Fine L.D."/>
            <person name="Fritchman J.L."/>
            <person name="Fuhrmann J.L."/>
            <person name="Geoghagen N.S.M."/>
            <person name="Gnehm C.L."/>
            <person name="McDonald L.A."/>
            <person name="Small K.V."/>
            <person name="Fraser C.M."/>
            <person name="Smith H.O."/>
            <person name="Venter J.C."/>
        </authorList>
    </citation>
    <scope>NUCLEOTIDE SEQUENCE [LARGE SCALE GENOMIC DNA]</scope>
    <source>
        <strain>ATCC 51907 / DSM 11121 / KW20 / Rd</strain>
    </source>
</reference>
<name>TRXB_HAEIN</name>
<feature type="chain" id="PRO_0000166732" description="Thioredoxin reductase">
    <location>
        <begin position="1"/>
        <end position="318"/>
    </location>
</feature>
<feature type="binding site" evidence="2">
    <location>
        <begin position="36"/>
        <end position="43"/>
    </location>
    <ligand>
        <name>FAD</name>
        <dbReference type="ChEBI" id="CHEBI:57692"/>
    </ligand>
</feature>
<feature type="binding site" evidence="2">
    <location>
        <begin position="286"/>
        <end position="295"/>
    </location>
    <ligand>
        <name>FAD</name>
        <dbReference type="ChEBI" id="CHEBI:57692"/>
    </ligand>
</feature>
<feature type="disulfide bond" description="Redox-active" evidence="2">
    <location>
        <begin position="136"/>
        <end position="139"/>
    </location>
</feature>
<feature type="strand" evidence="4">
    <location>
        <begin position="5"/>
        <end position="12"/>
    </location>
</feature>
<feature type="helix" evidence="4">
    <location>
        <begin position="16"/>
        <end position="27"/>
    </location>
</feature>
<feature type="strand" evidence="4">
    <location>
        <begin position="33"/>
        <end position="35"/>
    </location>
</feature>
<feature type="helix" evidence="4">
    <location>
        <begin position="43"/>
        <end position="46"/>
    </location>
</feature>
<feature type="helix" evidence="4">
    <location>
        <begin position="62"/>
        <end position="75"/>
    </location>
</feature>
<feature type="strand" evidence="4">
    <location>
        <begin position="79"/>
        <end position="81"/>
    </location>
</feature>
<feature type="strand" evidence="4">
    <location>
        <begin position="85"/>
        <end position="89"/>
    </location>
</feature>
<feature type="strand" evidence="4">
    <location>
        <begin position="91"/>
        <end position="101"/>
    </location>
</feature>
<feature type="strand" evidence="4">
    <location>
        <begin position="103"/>
        <end position="111"/>
    </location>
</feature>
<feature type="strand" evidence="4">
    <location>
        <begin position="115"/>
        <end position="117"/>
    </location>
</feature>
<feature type="helix" evidence="4">
    <location>
        <begin position="123"/>
        <end position="128"/>
    </location>
</feature>
<feature type="turn" evidence="4">
    <location>
        <begin position="130"/>
        <end position="132"/>
    </location>
</feature>
<feature type="strand" evidence="4">
    <location>
        <begin position="133"/>
        <end position="135"/>
    </location>
</feature>
<feature type="helix" evidence="4">
    <location>
        <begin position="137"/>
        <end position="140"/>
    </location>
</feature>
<feature type="helix" evidence="4">
    <location>
        <begin position="141"/>
        <end position="144"/>
    </location>
</feature>
<feature type="strand" evidence="4">
    <location>
        <begin position="147"/>
        <end position="152"/>
    </location>
</feature>
<feature type="helix" evidence="4">
    <location>
        <begin position="156"/>
        <end position="166"/>
    </location>
</feature>
<feature type="strand" evidence="4">
    <location>
        <begin position="169"/>
        <end position="175"/>
    </location>
</feature>
<feature type="strand" evidence="4">
    <location>
        <begin position="177"/>
        <end position="179"/>
    </location>
</feature>
<feature type="helix" evidence="4">
    <location>
        <begin position="185"/>
        <end position="196"/>
    </location>
</feature>
<feature type="strand" evidence="4">
    <location>
        <begin position="199"/>
        <end position="203"/>
    </location>
</feature>
<feature type="strand" evidence="4">
    <location>
        <begin position="205"/>
        <end position="213"/>
    </location>
</feature>
<feature type="strand" evidence="4">
    <location>
        <begin position="215"/>
        <end position="225"/>
    </location>
</feature>
<feature type="turn" evidence="4">
    <location>
        <begin position="226"/>
        <end position="228"/>
    </location>
</feature>
<feature type="strand" evidence="4">
    <location>
        <begin position="231"/>
        <end position="235"/>
    </location>
</feature>
<feature type="strand" evidence="4">
    <location>
        <begin position="237"/>
        <end position="241"/>
    </location>
</feature>
<feature type="strand" evidence="4">
    <location>
        <begin position="245"/>
        <end position="248"/>
    </location>
</feature>
<feature type="helix" evidence="4">
    <location>
        <begin position="250"/>
        <end position="252"/>
    </location>
</feature>
<feature type="turn" evidence="4">
    <location>
        <begin position="253"/>
        <end position="255"/>
    </location>
</feature>
<feature type="strand" evidence="4">
    <location>
        <begin position="268"/>
        <end position="271"/>
    </location>
</feature>
<feature type="strand" evidence="4">
    <location>
        <begin position="281"/>
        <end position="283"/>
    </location>
</feature>
<feature type="helix" evidence="4">
    <location>
        <begin position="285"/>
        <end position="288"/>
    </location>
</feature>
<feature type="helix" evidence="4">
    <location>
        <begin position="295"/>
        <end position="315"/>
    </location>
</feature>
<accession>P43788</accession>
<organism>
    <name type="scientific">Haemophilus influenzae (strain ATCC 51907 / DSM 11121 / KW20 / Rd)</name>
    <dbReference type="NCBI Taxonomy" id="71421"/>
    <lineage>
        <taxon>Bacteria</taxon>
        <taxon>Pseudomonadati</taxon>
        <taxon>Pseudomonadota</taxon>
        <taxon>Gammaproteobacteria</taxon>
        <taxon>Pasteurellales</taxon>
        <taxon>Pasteurellaceae</taxon>
        <taxon>Haemophilus</taxon>
    </lineage>
</organism>
<keyword id="KW-0002">3D-structure</keyword>
<keyword id="KW-0963">Cytoplasm</keyword>
<keyword id="KW-1015">Disulfide bond</keyword>
<keyword id="KW-0274">FAD</keyword>
<keyword id="KW-0285">Flavoprotein</keyword>
<keyword id="KW-0521">NADP</keyword>
<keyword id="KW-0560">Oxidoreductase</keyword>
<keyword id="KW-0676">Redox-active center</keyword>
<keyword id="KW-1185">Reference proteome</keyword>
<proteinExistence type="evidence at protein level"/>
<evidence type="ECO:0000250" key="1"/>
<evidence type="ECO:0000250" key="2">
    <source>
        <dbReference type="UniProtKB" id="P0A9P4"/>
    </source>
</evidence>
<evidence type="ECO:0000305" key="3"/>
<evidence type="ECO:0007829" key="4">
    <source>
        <dbReference type="PDB" id="5U63"/>
    </source>
</evidence>
<sequence length="318" mass="34395">MSDIKHAKLLILGSGPAGYTAAIYAARANLKPVLVTGLQQGGQLTTTDEIENWPGDFEMTTGSGLMQRMLQHAEKFETEIVFDHINRVDLSSRPFKLFGDVQNFTCDALIIATGASARYIGLPSEENYKGRGVSACATCDGFFYRNKPVGVIGGGNTAVEEALYLANIASTVHLIHRRDSFRAEKILIDRLYKKVEEGKIVLHTDRTLDEVLGDNMGVTGLRLANTKTGEKEELKLDGLFVAIGHSPNTEIFQGQLELNNGYIVVKSGLDGNATATSVEGVFAAGDVMDHNYRQAITSAGTGCMAALDAERYLDAQEA</sequence>
<gene>
    <name type="primary">trxB</name>
    <name type="ordered locus">HI_1158</name>
</gene>
<protein>
    <recommendedName>
        <fullName>Thioredoxin reductase</fullName>
        <shortName>TRXR</shortName>
        <ecNumber>1.8.1.9</ecNumber>
    </recommendedName>
</protein>
<dbReference type="EC" id="1.8.1.9"/>
<dbReference type="EMBL" id="L42023">
    <property type="protein sequence ID" value="AAC22813.1"/>
    <property type="molecule type" value="Genomic_DNA"/>
</dbReference>
<dbReference type="PIR" id="G64186">
    <property type="entry name" value="G64186"/>
</dbReference>
<dbReference type="RefSeq" id="NP_439316.1">
    <property type="nucleotide sequence ID" value="NC_000907.1"/>
</dbReference>
<dbReference type="PDB" id="5U63">
    <property type="method" value="X-ray"/>
    <property type="resolution" value="1.99 A"/>
    <property type="chains" value="A/B=1-318"/>
</dbReference>
<dbReference type="PDBsum" id="5U63"/>
<dbReference type="SMR" id="P43788"/>
<dbReference type="STRING" id="71421.HI_1158"/>
<dbReference type="EnsemblBacteria" id="AAC22813">
    <property type="protein sequence ID" value="AAC22813"/>
    <property type="gene ID" value="HI_1158"/>
</dbReference>
<dbReference type="KEGG" id="hin:HI_1158"/>
<dbReference type="PATRIC" id="fig|71421.8.peg.1209"/>
<dbReference type="eggNOG" id="COG0492">
    <property type="taxonomic scope" value="Bacteria"/>
</dbReference>
<dbReference type="HOGENOM" id="CLU_031864_5_1_6"/>
<dbReference type="OrthoDB" id="9806179at2"/>
<dbReference type="PhylomeDB" id="P43788"/>
<dbReference type="BioCyc" id="HINF71421:G1GJ1-1192-MONOMER"/>
<dbReference type="Proteomes" id="UP000000579">
    <property type="component" value="Chromosome"/>
</dbReference>
<dbReference type="GO" id="GO:0005737">
    <property type="term" value="C:cytoplasm"/>
    <property type="evidence" value="ECO:0007669"/>
    <property type="project" value="UniProtKB-SubCell"/>
</dbReference>
<dbReference type="GO" id="GO:0004791">
    <property type="term" value="F:thioredoxin-disulfide reductase (NADPH) activity"/>
    <property type="evidence" value="ECO:0000318"/>
    <property type="project" value="GO_Central"/>
</dbReference>
<dbReference type="GO" id="GO:0045454">
    <property type="term" value="P:cell redox homeostasis"/>
    <property type="evidence" value="ECO:0000318"/>
    <property type="project" value="GO_Central"/>
</dbReference>
<dbReference type="GO" id="GO:0019430">
    <property type="term" value="P:removal of superoxide radicals"/>
    <property type="evidence" value="ECO:0007669"/>
    <property type="project" value="InterPro"/>
</dbReference>
<dbReference type="FunFam" id="3.50.50.60:FF:000007">
    <property type="entry name" value="Alkyl hydroperoxide reductase, F subunit"/>
    <property type="match status" value="1"/>
</dbReference>
<dbReference type="Gene3D" id="3.50.50.60">
    <property type="entry name" value="FAD/NAD(P)-binding domain"/>
    <property type="match status" value="2"/>
</dbReference>
<dbReference type="InterPro" id="IPR036188">
    <property type="entry name" value="FAD/NAD-bd_sf"/>
</dbReference>
<dbReference type="InterPro" id="IPR023753">
    <property type="entry name" value="FAD/NAD-binding_dom"/>
</dbReference>
<dbReference type="InterPro" id="IPR050097">
    <property type="entry name" value="Ferredoxin-NADP_redctase_2"/>
</dbReference>
<dbReference type="InterPro" id="IPR008255">
    <property type="entry name" value="Pyr_nucl-diS_OxRdtase_2_AS"/>
</dbReference>
<dbReference type="InterPro" id="IPR005982">
    <property type="entry name" value="Thioredox_Rdtase"/>
</dbReference>
<dbReference type="NCBIfam" id="TIGR01292">
    <property type="entry name" value="TRX_reduct"/>
    <property type="match status" value="1"/>
</dbReference>
<dbReference type="PANTHER" id="PTHR48105">
    <property type="entry name" value="THIOREDOXIN REDUCTASE 1-RELATED-RELATED"/>
    <property type="match status" value="1"/>
</dbReference>
<dbReference type="Pfam" id="PF07992">
    <property type="entry name" value="Pyr_redox_2"/>
    <property type="match status" value="1"/>
</dbReference>
<dbReference type="PRINTS" id="PR00368">
    <property type="entry name" value="FADPNR"/>
</dbReference>
<dbReference type="PRINTS" id="PR00469">
    <property type="entry name" value="PNDRDTASEII"/>
</dbReference>
<dbReference type="SUPFAM" id="SSF51905">
    <property type="entry name" value="FAD/NAD(P)-binding domain"/>
    <property type="match status" value="1"/>
</dbReference>
<dbReference type="PROSITE" id="PS00573">
    <property type="entry name" value="PYRIDINE_REDOX_2"/>
    <property type="match status" value="1"/>
</dbReference>